<feature type="chain" id="PRO_0000350801" description="Putative uncharacterized transmembrane protein DDB_G0285347">
    <location>
        <begin position="1"/>
        <end position="196"/>
    </location>
</feature>
<feature type="transmembrane region" description="Helical" evidence="1">
    <location>
        <begin position="71"/>
        <end position="87"/>
    </location>
</feature>
<reference key="1">
    <citation type="journal article" date="2005" name="Nature">
        <title>The genome of the social amoeba Dictyostelium discoideum.</title>
        <authorList>
            <person name="Eichinger L."/>
            <person name="Pachebat J.A."/>
            <person name="Gloeckner G."/>
            <person name="Rajandream M.A."/>
            <person name="Sucgang R."/>
            <person name="Berriman M."/>
            <person name="Song J."/>
            <person name="Olsen R."/>
            <person name="Szafranski K."/>
            <person name="Xu Q."/>
            <person name="Tunggal B."/>
            <person name="Kummerfeld S."/>
            <person name="Madera M."/>
            <person name="Konfortov B.A."/>
            <person name="Rivero F."/>
            <person name="Bankier A.T."/>
            <person name="Lehmann R."/>
            <person name="Hamlin N."/>
            <person name="Davies R."/>
            <person name="Gaudet P."/>
            <person name="Fey P."/>
            <person name="Pilcher K."/>
            <person name="Chen G."/>
            <person name="Saunders D."/>
            <person name="Sodergren E.J."/>
            <person name="Davis P."/>
            <person name="Kerhornou A."/>
            <person name="Nie X."/>
            <person name="Hall N."/>
            <person name="Anjard C."/>
            <person name="Hemphill L."/>
            <person name="Bason N."/>
            <person name="Farbrother P."/>
            <person name="Desany B."/>
            <person name="Just E."/>
            <person name="Morio T."/>
            <person name="Rost R."/>
            <person name="Churcher C.M."/>
            <person name="Cooper J."/>
            <person name="Haydock S."/>
            <person name="van Driessche N."/>
            <person name="Cronin A."/>
            <person name="Goodhead I."/>
            <person name="Muzny D.M."/>
            <person name="Mourier T."/>
            <person name="Pain A."/>
            <person name="Lu M."/>
            <person name="Harper D."/>
            <person name="Lindsay R."/>
            <person name="Hauser H."/>
            <person name="James K.D."/>
            <person name="Quiles M."/>
            <person name="Madan Babu M."/>
            <person name="Saito T."/>
            <person name="Buchrieser C."/>
            <person name="Wardroper A."/>
            <person name="Felder M."/>
            <person name="Thangavelu M."/>
            <person name="Johnson D."/>
            <person name="Knights A."/>
            <person name="Loulseged H."/>
            <person name="Mungall K.L."/>
            <person name="Oliver K."/>
            <person name="Price C."/>
            <person name="Quail M.A."/>
            <person name="Urushihara H."/>
            <person name="Hernandez J."/>
            <person name="Rabbinowitsch E."/>
            <person name="Steffen D."/>
            <person name="Sanders M."/>
            <person name="Ma J."/>
            <person name="Kohara Y."/>
            <person name="Sharp S."/>
            <person name="Simmonds M.N."/>
            <person name="Spiegler S."/>
            <person name="Tivey A."/>
            <person name="Sugano S."/>
            <person name="White B."/>
            <person name="Walker D."/>
            <person name="Woodward J.R."/>
            <person name="Winckler T."/>
            <person name="Tanaka Y."/>
            <person name="Shaulsky G."/>
            <person name="Schleicher M."/>
            <person name="Weinstock G.M."/>
            <person name="Rosenthal A."/>
            <person name="Cox E.C."/>
            <person name="Chisholm R.L."/>
            <person name="Gibbs R.A."/>
            <person name="Loomis W.F."/>
            <person name="Platzer M."/>
            <person name="Kay R.R."/>
            <person name="Williams J.G."/>
            <person name="Dear P.H."/>
            <person name="Noegel A.A."/>
            <person name="Barrell B.G."/>
            <person name="Kuspa A."/>
        </authorList>
    </citation>
    <scope>NUCLEOTIDE SEQUENCE [LARGE SCALE GENOMIC DNA]</scope>
    <source>
        <strain>AX4</strain>
    </source>
</reference>
<accession>Q54NC9</accession>
<sequence>MTIKIRSEETCTESKFFYHNQDVTYNYHLDMVDNGINIWTSIHGKNAGLLPFVFQSFQISSEEDAISFYKYVKLIGTGCYVAILISGNLPYHSKRITKAMKLVGGGSKSIETLSDSNPNFCLIGYKGQKIGSARQAIGDADIEEEGGISVWMMTTKNRCLFKNRILINLRNKTPLGTISQLYKKHIKKEMTNNIYL</sequence>
<comment type="subcellular location">
    <subcellularLocation>
        <location evidence="2">Membrane</location>
        <topology evidence="2">Single-pass membrane protein</topology>
    </subcellularLocation>
</comment>
<dbReference type="EMBL" id="AAFI02000079">
    <property type="protein sequence ID" value="EAL64748.1"/>
    <property type="molecule type" value="Genomic_DNA"/>
</dbReference>
<dbReference type="RefSeq" id="XP_638251.1">
    <property type="nucleotide sequence ID" value="XM_633159.1"/>
</dbReference>
<dbReference type="FunCoup" id="Q54NC9">
    <property type="interactions" value="877"/>
</dbReference>
<dbReference type="PaxDb" id="44689-DDB0186453"/>
<dbReference type="EnsemblProtists" id="EAL64748">
    <property type="protein sequence ID" value="EAL64748"/>
    <property type="gene ID" value="DDB_G0285347"/>
</dbReference>
<dbReference type="GeneID" id="8625059"/>
<dbReference type="KEGG" id="ddi:DDB_G0285347"/>
<dbReference type="dictyBase" id="DDB_G0285347"/>
<dbReference type="VEuPathDB" id="AmoebaDB:DDB_G0285347"/>
<dbReference type="eggNOG" id="ENOG502RI28">
    <property type="taxonomic scope" value="Eukaryota"/>
</dbReference>
<dbReference type="HOGENOM" id="CLU_1392461_0_0_1"/>
<dbReference type="InParanoid" id="Q54NC9"/>
<dbReference type="OMA" id="INIWTSI"/>
<dbReference type="PRO" id="PR:Q54NC9"/>
<dbReference type="Proteomes" id="UP000002195">
    <property type="component" value="Chromosome 4"/>
</dbReference>
<dbReference type="GO" id="GO:0016020">
    <property type="term" value="C:membrane"/>
    <property type="evidence" value="ECO:0007669"/>
    <property type="project" value="UniProtKB-SubCell"/>
</dbReference>
<dbReference type="InterPro" id="IPR039477">
    <property type="entry name" value="ILEI/PANDER_dom"/>
</dbReference>
<dbReference type="Pfam" id="PF15711">
    <property type="entry name" value="ILEI"/>
    <property type="match status" value="1"/>
</dbReference>
<gene>
    <name type="ORF">DDB_G0285347</name>
</gene>
<name>Y6453_DICDI</name>
<evidence type="ECO:0000255" key="1"/>
<evidence type="ECO:0000305" key="2"/>
<protein>
    <recommendedName>
        <fullName>Putative uncharacterized transmembrane protein DDB_G0285347</fullName>
    </recommendedName>
</protein>
<keyword id="KW-0472">Membrane</keyword>
<keyword id="KW-1185">Reference proteome</keyword>
<keyword id="KW-0812">Transmembrane</keyword>
<keyword id="KW-1133">Transmembrane helix</keyword>
<proteinExistence type="predicted"/>
<organism>
    <name type="scientific">Dictyostelium discoideum</name>
    <name type="common">Social amoeba</name>
    <dbReference type="NCBI Taxonomy" id="44689"/>
    <lineage>
        <taxon>Eukaryota</taxon>
        <taxon>Amoebozoa</taxon>
        <taxon>Evosea</taxon>
        <taxon>Eumycetozoa</taxon>
        <taxon>Dictyostelia</taxon>
        <taxon>Dictyosteliales</taxon>
        <taxon>Dictyosteliaceae</taxon>
        <taxon>Dictyostelium</taxon>
    </lineage>
</organism>